<name>FA83D_MOUSE</name>
<keyword id="KW-0025">Alternative splicing</keyword>
<keyword id="KW-0131">Cell cycle</keyword>
<keyword id="KW-0132">Cell division</keyword>
<keyword id="KW-0963">Cytoplasm</keyword>
<keyword id="KW-0206">Cytoskeleton</keyword>
<keyword id="KW-0498">Mitosis</keyword>
<keyword id="KW-0597">Phosphoprotein</keyword>
<keyword id="KW-0656">Proto-oncogene</keyword>
<keyword id="KW-1185">Reference proteome</keyword>
<feature type="chain" id="PRO_0000079461" description="Protein FAM83D">
    <location>
        <begin position="1"/>
        <end position="585"/>
    </location>
</feature>
<feature type="region of interest" description="DUF1669" evidence="1">
    <location>
        <begin position="1"/>
        <end position="296"/>
    </location>
</feature>
<feature type="region of interest" description="Disordered" evidence="2">
    <location>
        <begin position="334"/>
        <end position="411"/>
    </location>
</feature>
<feature type="region of interest" description="Required for interaction with KIF22 and function in chromosome congression" evidence="1">
    <location>
        <begin position="337"/>
        <end position="585"/>
    </location>
</feature>
<feature type="region of interest" description="Disordered" evidence="2">
    <location>
        <begin position="425"/>
        <end position="482"/>
    </location>
</feature>
<feature type="compositionally biased region" description="Basic and acidic residues" evidence="2">
    <location>
        <begin position="347"/>
        <end position="360"/>
    </location>
</feature>
<feature type="compositionally biased region" description="Basic and acidic residues" evidence="2">
    <location>
        <begin position="369"/>
        <end position="383"/>
    </location>
</feature>
<feature type="compositionally biased region" description="Polar residues" evidence="2">
    <location>
        <begin position="425"/>
        <end position="441"/>
    </location>
</feature>
<feature type="compositionally biased region" description="Low complexity" evidence="2">
    <location>
        <begin position="458"/>
        <end position="482"/>
    </location>
</feature>
<feature type="modified residue" description="Phosphoserine" evidence="1">
    <location>
        <position position="295"/>
    </location>
</feature>
<feature type="modified residue" description="Phosphoserine" evidence="1">
    <location>
        <position position="458"/>
    </location>
</feature>
<feature type="modified residue" description="Phosphothreonine" evidence="1">
    <location>
        <position position="511"/>
    </location>
</feature>
<feature type="splice variant" id="VSP_039768" description="In isoform 3." evidence="4">
    <location>
        <begin position="1"/>
        <end position="328"/>
    </location>
</feature>
<feature type="splice variant" id="VSP_036447" description="In isoform 2." evidence="5">
    <location>
        <begin position="1"/>
        <end position="215"/>
    </location>
</feature>
<feature type="sequence conflict" description="In Ref. 3; AAH64129." evidence="6" ref="3">
    <original>Y</original>
    <variation>F</variation>
    <location>
        <position position="255"/>
    </location>
</feature>
<gene>
    <name evidence="7" type="primary">Fam83d</name>
</gene>
<accession>Q9D7I8</accession>
<accession>A2AC91</accession>
<accession>Q3TXE0</accession>
<accession>Q6P396</accession>
<accession>Q8BYC0</accession>
<comment type="function">
    <text evidence="1">Through the degradation of FBXW7, may act indirectly on the expression and downstream signaling of MTOR, JUN and MYC (By similarity). May play also a role in cell proliferation through activation of the ERK1/ERK2 signaling cascade (By similarity). May also be important for proper chromosome congression and alignment during mitosis through its interaction with KIF22 (By similarity).</text>
</comment>
<comment type="subunit">
    <text evidence="1">Interacts with FBXW7; promotes FBXW7 degradation (By similarity). May interact with RAF1 (By similarity). Interacts with KIF22; recruits KIF22 to mitotic spindle microtubules (By similarity). Interacts (via C-terminus) with DYNLL1 (By similarity). Interacts with HMMR (By similarity). Directly interacts (via DUF1669) with CSNK1A1 and CSNK1A1L (By similarity).</text>
</comment>
<comment type="subcellular location">
    <subcellularLocation>
        <location evidence="1">Cytoplasm</location>
    </subcellularLocation>
    <subcellularLocation>
        <location evidence="1">Cytoplasm</location>
        <location evidence="1">Cytoskeleton</location>
        <location evidence="1">Spindle</location>
    </subcellularLocation>
    <subcellularLocation>
        <location evidence="1">Cytoplasm</location>
        <location evidence="1">Cytoskeleton</location>
        <location evidence="1">Spindle pole</location>
    </subcellularLocation>
    <text evidence="1">Primarily cytoplasmic during interphase, but at prophase, associates with spindle microtubules, with a clear concentration toward the spindle poles. It persists on spindle microtubules through metaphase and anaphase.</text>
</comment>
<comment type="alternative products">
    <event type="alternative splicing"/>
    <isoform>
        <id>Q9D7I8-1</id>
        <name>1</name>
        <sequence type="displayed"/>
    </isoform>
    <isoform>
        <id>Q9D7I8-2</id>
        <name>2</name>
        <sequence type="described" ref="VSP_036447"/>
    </isoform>
    <isoform>
        <id>Q9D7I8-3</id>
        <name>3</name>
        <sequence type="described" ref="VSP_039768"/>
    </isoform>
</comment>
<comment type="domain">
    <text evidence="1">All members of the FAM83 family of proteins share a conserved N-terminal DUF1669 (domain of unknown function 1669) domain of about 300 amino acids. This domain mediates the interaction with casein kinase 1 (CK1) isoforms. Therefore, it has been proposed to rename DUF1669 the polypeptide anchor of CK1 domain.</text>
</comment>
<comment type="PTM">
    <text evidence="3">Phosphorylated during mitosis.</text>
</comment>
<comment type="similarity">
    <text evidence="6">Belongs to the FAM83 family.</text>
</comment>
<protein>
    <recommendedName>
        <fullName evidence="6">Protein FAM83D</fullName>
    </recommendedName>
</protein>
<proteinExistence type="evidence at protein level"/>
<organism>
    <name type="scientific">Mus musculus</name>
    <name type="common">Mouse</name>
    <dbReference type="NCBI Taxonomy" id="10090"/>
    <lineage>
        <taxon>Eukaryota</taxon>
        <taxon>Metazoa</taxon>
        <taxon>Chordata</taxon>
        <taxon>Craniata</taxon>
        <taxon>Vertebrata</taxon>
        <taxon>Euteleostomi</taxon>
        <taxon>Mammalia</taxon>
        <taxon>Eutheria</taxon>
        <taxon>Euarchontoglires</taxon>
        <taxon>Glires</taxon>
        <taxon>Rodentia</taxon>
        <taxon>Myomorpha</taxon>
        <taxon>Muroidea</taxon>
        <taxon>Muridae</taxon>
        <taxon>Murinae</taxon>
        <taxon>Mus</taxon>
        <taxon>Mus</taxon>
    </lineage>
</organism>
<evidence type="ECO:0000250" key="1">
    <source>
        <dbReference type="UniProtKB" id="Q9H4H8"/>
    </source>
</evidence>
<evidence type="ECO:0000256" key="2">
    <source>
        <dbReference type="SAM" id="MobiDB-lite"/>
    </source>
</evidence>
<evidence type="ECO:0000269" key="3">
    <source>
    </source>
</evidence>
<evidence type="ECO:0000303" key="4">
    <source>
    </source>
</evidence>
<evidence type="ECO:0000303" key="5">
    <source>
    </source>
</evidence>
<evidence type="ECO:0000305" key="6"/>
<evidence type="ECO:0000312" key="7">
    <source>
        <dbReference type="MGI" id="MGI:1919128"/>
    </source>
</evidence>
<dbReference type="EMBL" id="AK009199">
    <property type="status" value="NOT_ANNOTATED_CDS"/>
    <property type="molecule type" value="mRNA"/>
</dbReference>
<dbReference type="EMBL" id="AK040615">
    <property type="protein sequence ID" value="BAC30645.1"/>
    <property type="molecule type" value="mRNA"/>
</dbReference>
<dbReference type="EMBL" id="AK156048">
    <property type="protein sequence ID" value="BAE33562.1"/>
    <property type="molecule type" value="mRNA"/>
</dbReference>
<dbReference type="EMBL" id="AK159308">
    <property type="protein sequence ID" value="BAE34976.1"/>
    <property type="molecule type" value="mRNA"/>
</dbReference>
<dbReference type="EMBL" id="AL663077">
    <property type="status" value="NOT_ANNOTATED_CDS"/>
    <property type="molecule type" value="Genomic_DNA"/>
</dbReference>
<dbReference type="EMBL" id="AL669910">
    <property type="status" value="NOT_ANNOTATED_CDS"/>
    <property type="molecule type" value="Genomic_DNA"/>
</dbReference>
<dbReference type="EMBL" id="BC064129">
    <property type="protein sequence ID" value="AAH64129.1"/>
    <property type="molecule type" value="mRNA"/>
</dbReference>
<dbReference type="EMBL" id="BC068129">
    <property type="protein sequence ID" value="AAH68129.1"/>
    <property type="molecule type" value="mRNA"/>
</dbReference>
<dbReference type="CCDS" id="CCDS50788.1">
    <molecule id="Q9D7I8-1"/>
</dbReference>
<dbReference type="RefSeq" id="NP_082251.2">
    <molecule id="Q9D7I8-1"/>
    <property type="nucleotide sequence ID" value="NM_027975.3"/>
</dbReference>
<dbReference type="RefSeq" id="XP_006500260.1">
    <property type="nucleotide sequence ID" value="XM_006500197.1"/>
</dbReference>
<dbReference type="SMR" id="Q9D7I8"/>
<dbReference type="BioGRID" id="215001">
    <property type="interactions" value="13"/>
</dbReference>
<dbReference type="FunCoup" id="Q9D7I8">
    <property type="interactions" value="401"/>
</dbReference>
<dbReference type="IntAct" id="Q9D7I8">
    <property type="interactions" value="13"/>
</dbReference>
<dbReference type="STRING" id="10090.ENSMUSP00000029183"/>
<dbReference type="iPTMnet" id="Q9D7I8"/>
<dbReference type="PhosphoSitePlus" id="Q9D7I8"/>
<dbReference type="PaxDb" id="10090-ENSMUSP00000029183"/>
<dbReference type="PeptideAtlas" id="Q9D7I8"/>
<dbReference type="ProteomicsDB" id="267698">
    <molecule id="Q9D7I8-1"/>
</dbReference>
<dbReference type="ProteomicsDB" id="267699">
    <molecule id="Q9D7I8-2"/>
</dbReference>
<dbReference type="ProteomicsDB" id="267700">
    <molecule id="Q9D7I8-3"/>
</dbReference>
<dbReference type="Pumba" id="Q9D7I8"/>
<dbReference type="Antibodypedia" id="57303">
    <property type="antibodies" value="75 antibodies from 16 providers"/>
</dbReference>
<dbReference type="Ensembl" id="ENSMUST00000029183.3">
    <molecule id="Q9D7I8-1"/>
    <property type="protein sequence ID" value="ENSMUSP00000029183.3"/>
    <property type="gene ID" value="ENSMUSG00000027654.3"/>
</dbReference>
<dbReference type="GeneID" id="71878"/>
<dbReference type="KEGG" id="mmu:71878"/>
<dbReference type="UCSC" id="uc008nqq.2">
    <molecule id="Q9D7I8-1"/>
    <property type="organism name" value="mouse"/>
</dbReference>
<dbReference type="AGR" id="MGI:1919128"/>
<dbReference type="CTD" id="81610"/>
<dbReference type="MGI" id="MGI:1919128">
    <property type="gene designation" value="Fam83d"/>
</dbReference>
<dbReference type="VEuPathDB" id="HostDB:ENSMUSG00000027654"/>
<dbReference type="eggNOG" id="ENOG502RC3Z">
    <property type="taxonomic scope" value="Eukaryota"/>
</dbReference>
<dbReference type="GeneTree" id="ENSGT00940000158405"/>
<dbReference type="HOGENOM" id="CLU_040298_0_0_1"/>
<dbReference type="InParanoid" id="Q9D7I8"/>
<dbReference type="OMA" id="HFLDMCM"/>
<dbReference type="OrthoDB" id="9882762at2759"/>
<dbReference type="PhylomeDB" id="Q9D7I8"/>
<dbReference type="TreeFam" id="TF330777"/>
<dbReference type="Reactome" id="R-MMU-177929">
    <property type="pathway name" value="Signaling by EGFR"/>
</dbReference>
<dbReference type="BioGRID-ORCS" id="71878">
    <property type="hits" value="3 hits in 78 CRISPR screens"/>
</dbReference>
<dbReference type="PRO" id="PR:Q9D7I8"/>
<dbReference type="Proteomes" id="UP000000589">
    <property type="component" value="Chromosome 2"/>
</dbReference>
<dbReference type="RNAct" id="Q9D7I8">
    <property type="molecule type" value="protein"/>
</dbReference>
<dbReference type="Bgee" id="ENSMUSG00000027654">
    <property type="expression patterns" value="Expressed in dorsal pancreas and 138 other cell types or tissues"/>
</dbReference>
<dbReference type="GO" id="GO:0005737">
    <property type="term" value="C:cytoplasm"/>
    <property type="evidence" value="ECO:0000250"/>
    <property type="project" value="UniProtKB"/>
</dbReference>
<dbReference type="GO" id="GO:0005829">
    <property type="term" value="C:cytosol"/>
    <property type="evidence" value="ECO:0007669"/>
    <property type="project" value="Ensembl"/>
</dbReference>
<dbReference type="GO" id="GO:0045171">
    <property type="term" value="C:intercellular bridge"/>
    <property type="evidence" value="ECO:0007669"/>
    <property type="project" value="Ensembl"/>
</dbReference>
<dbReference type="GO" id="GO:0097431">
    <property type="term" value="C:mitotic spindle pole"/>
    <property type="evidence" value="ECO:0000250"/>
    <property type="project" value="UniProtKB"/>
</dbReference>
<dbReference type="GO" id="GO:0019894">
    <property type="term" value="F:kinesin binding"/>
    <property type="evidence" value="ECO:0007669"/>
    <property type="project" value="Ensembl"/>
</dbReference>
<dbReference type="GO" id="GO:0008017">
    <property type="term" value="F:microtubule binding"/>
    <property type="evidence" value="ECO:0000250"/>
    <property type="project" value="UniProtKB"/>
</dbReference>
<dbReference type="GO" id="GO:0019901">
    <property type="term" value="F:protein kinase binding"/>
    <property type="evidence" value="ECO:0007669"/>
    <property type="project" value="Ensembl"/>
</dbReference>
<dbReference type="GO" id="GO:0051301">
    <property type="term" value="P:cell division"/>
    <property type="evidence" value="ECO:0007669"/>
    <property type="project" value="UniProtKB-KW"/>
</dbReference>
<dbReference type="GO" id="GO:0016477">
    <property type="term" value="P:cell migration"/>
    <property type="evidence" value="ECO:0000250"/>
    <property type="project" value="UniProtKB"/>
</dbReference>
<dbReference type="GO" id="GO:0008283">
    <property type="term" value="P:cell population proliferation"/>
    <property type="evidence" value="ECO:0000250"/>
    <property type="project" value="UniProtKB"/>
</dbReference>
<dbReference type="GO" id="GO:0001837">
    <property type="term" value="P:epithelial to mesenchymal transition"/>
    <property type="evidence" value="ECO:0000250"/>
    <property type="project" value="UniProtKB"/>
</dbReference>
<dbReference type="GO" id="GO:0051310">
    <property type="term" value="P:metaphase chromosome alignment"/>
    <property type="evidence" value="ECO:0000250"/>
    <property type="project" value="UniProtKB"/>
</dbReference>
<dbReference type="GO" id="GO:1902808">
    <property type="term" value="P:positive regulation of cell cycle G1/S phase transition"/>
    <property type="evidence" value="ECO:0000250"/>
    <property type="project" value="UniProtKB"/>
</dbReference>
<dbReference type="GO" id="GO:1902480">
    <property type="term" value="P:protein localization to mitotic spindle"/>
    <property type="evidence" value="ECO:0000250"/>
    <property type="project" value="UniProtKB"/>
</dbReference>
<dbReference type="GO" id="GO:0070372">
    <property type="term" value="P:regulation of ERK1 and ERK2 cascade"/>
    <property type="evidence" value="ECO:0000250"/>
    <property type="project" value="UniProtKB"/>
</dbReference>
<dbReference type="GO" id="GO:0042176">
    <property type="term" value="P:regulation of protein catabolic process"/>
    <property type="evidence" value="ECO:0000250"/>
    <property type="project" value="UniProtKB"/>
</dbReference>
<dbReference type="GO" id="GO:0032006">
    <property type="term" value="P:regulation of TOR signaling"/>
    <property type="evidence" value="ECO:0000250"/>
    <property type="project" value="UniProtKB"/>
</dbReference>
<dbReference type="FunFam" id="3.30.870.10:FF:000004">
    <property type="entry name" value="protein FAM83H isoform X2"/>
    <property type="match status" value="1"/>
</dbReference>
<dbReference type="Gene3D" id="3.30.870.10">
    <property type="entry name" value="Endonuclease Chain A"/>
    <property type="match status" value="1"/>
</dbReference>
<dbReference type="InterPro" id="IPR050944">
    <property type="entry name" value="FAM83"/>
</dbReference>
<dbReference type="InterPro" id="IPR012461">
    <property type="entry name" value="SACK1"/>
</dbReference>
<dbReference type="PANTHER" id="PTHR16181">
    <property type="entry name" value="PROTEIN FAM83A-RELATED"/>
    <property type="match status" value="1"/>
</dbReference>
<dbReference type="PANTHER" id="PTHR16181:SF29">
    <property type="entry name" value="PROTEIN FAM83A-RELATED"/>
    <property type="match status" value="1"/>
</dbReference>
<dbReference type="Pfam" id="PF07894">
    <property type="entry name" value="SACK1"/>
    <property type="match status" value="1"/>
</dbReference>
<dbReference type="SUPFAM" id="SSF56024">
    <property type="entry name" value="Phospholipase D/nuclease"/>
    <property type="match status" value="1"/>
</dbReference>
<sequence length="585" mass="64324">MAARFELLDDLPAACLSPCGPPNPTELFSEARRLALEQLLAGGPDAWAAFLRRERLGRFLNADEVREVLGAAERPGEDGAAVAEDSFGSSHECSSGTYFPEQSDLEPPALELGWPSFYQGAYRGATRVEAHFQPRGAGAGGPYGCKDALRQQLRSAREVIAVVMDVFSDIDIFRDLQESCRKRGVAVYILLDQTLLPHFLDMCMDLRVHPEQEKLMTVRTITGNIYYARSGTKVVGKVHEKFTLIDGIRVATGSYSFTWTDGKLNSSNLVILSGQVVEHFDLEFRILYAQSEPISSKLLSNFQINSKFDHLADRKPQSKEPTLGNLLRMRLARLSSTPRKSNLGPEEPPKDRAKPKRPDSEASTISDEDYFHSHKDQLEDSKVADAATQTEPREEMAAVSLSEVGTQTSSSMMCVGTQTTVVTRAASSQATVWSKSTTTQTEADESFLPQGAQSKEGSPASKMSVSRSSSVRSSSSVSSQGSLASSVSSHVSLTAADLHTPAYPKYLGLGTPHLDLCLRDSFRNLSKERQVHFTGIRSRLTQMLTVLSRRTLFTEHYLSYSPGSFTRASTNLVSVRDIALYPPYQ</sequence>
<reference key="1">
    <citation type="journal article" date="2005" name="Science">
        <title>The transcriptional landscape of the mammalian genome.</title>
        <authorList>
            <person name="Carninci P."/>
            <person name="Kasukawa T."/>
            <person name="Katayama S."/>
            <person name="Gough J."/>
            <person name="Frith M.C."/>
            <person name="Maeda N."/>
            <person name="Oyama R."/>
            <person name="Ravasi T."/>
            <person name="Lenhard B."/>
            <person name="Wells C."/>
            <person name="Kodzius R."/>
            <person name="Shimokawa K."/>
            <person name="Bajic V.B."/>
            <person name="Brenner S.E."/>
            <person name="Batalov S."/>
            <person name="Forrest A.R."/>
            <person name="Zavolan M."/>
            <person name="Davis M.J."/>
            <person name="Wilming L.G."/>
            <person name="Aidinis V."/>
            <person name="Allen J.E."/>
            <person name="Ambesi-Impiombato A."/>
            <person name="Apweiler R."/>
            <person name="Aturaliya R.N."/>
            <person name="Bailey T.L."/>
            <person name="Bansal M."/>
            <person name="Baxter L."/>
            <person name="Beisel K.W."/>
            <person name="Bersano T."/>
            <person name="Bono H."/>
            <person name="Chalk A.M."/>
            <person name="Chiu K.P."/>
            <person name="Choudhary V."/>
            <person name="Christoffels A."/>
            <person name="Clutterbuck D.R."/>
            <person name="Crowe M.L."/>
            <person name="Dalla E."/>
            <person name="Dalrymple B.P."/>
            <person name="de Bono B."/>
            <person name="Della Gatta G."/>
            <person name="di Bernardo D."/>
            <person name="Down T."/>
            <person name="Engstrom P."/>
            <person name="Fagiolini M."/>
            <person name="Faulkner G."/>
            <person name="Fletcher C.F."/>
            <person name="Fukushima T."/>
            <person name="Furuno M."/>
            <person name="Futaki S."/>
            <person name="Gariboldi M."/>
            <person name="Georgii-Hemming P."/>
            <person name="Gingeras T.R."/>
            <person name="Gojobori T."/>
            <person name="Green R.E."/>
            <person name="Gustincich S."/>
            <person name="Harbers M."/>
            <person name="Hayashi Y."/>
            <person name="Hensch T.K."/>
            <person name="Hirokawa N."/>
            <person name="Hill D."/>
            <person name="Huminiecki L."/>
            <person name="Iacono M."/>
            <person name="Ikeo K."/>
            <person name="Iwama A."/>
            <person name="Ishikawa T."/>
            <person name="Jakt M."/>
            <person name="Kanapin A."/>
            <person name="Katoh M."/>
            <person name="Kawasawa Y."/>
            <person name="Kelso J."/>
            <person name="Kitamura H."/>
            <person name="Kitano H."/>
            <person name="Kollias G."/>
            <person name="Krishnan S.P."/>
            <person name="Kruger A."/>
            <person name="Kummerfeld S.K."/>
            <person name="Kurochkin I.V."/>
            <person name="Lareau L.F."/>
            <person name="Lazarevic D."/>
            <person name="Lipovich L."/>
            <person name="Liu J."/>
            <person name="Liuni S."/>
            <person name="McWilliam S."/>
            <person name="Madan Babu M."/>
            <person name="Madera M."/>
            <person name="Marchionni L."/>
            <person name="Matsuda H."/>
            <person name="Matsuzawa S."/>
            <person name="Miki H."/>
            <person name="Mignone F."/>
            <person name="Miyake S."/>
            <person name="Morris K."/>
            <person name="Mottagui-Tabar S."/>
            <person name="Mulder N."/>
            <person name="Nakano N."/>
            <person name="Nakauchi H."/>
            <person name="Ng P."/>
            <person name="Nilsson R."/>
            <person name="Nishiguchi S."/>
            <person name="Nishikawa S."/>
            <person name="Nori F."/>
            <person name="Ohara O."/>
            <person name="Okazaki Y."/>
            <person name="Orlando V."/>
            <person name="Pang K.C."/>
            <person name="Pavan W.J."/>
            <person name="Pavesi G."/>
            <person name="Pesole G."/>
            <person name="Petrovsky N."/>
            <person name="Piazza S."/>
            <person name="Reed J."/>
            <person name="Reid J.F."/>
            <person name="Ring B.Z."/>
            <person name="Ringwald M."/>
            <person name="Rost B."/>
            <person name="Ruan Y."/>
            <person name="Salzberg S.L."/>
            <person name="Sandelin A."/>
            <person name="Schneider C."/>
            <person name="Schoenbach C."/>
            <person name="Sekiguchi K."/>
            <person name="Semple C.A."/>
            <person name="Seno S."/>
            <person name="Sessa L."/>
            <person name="Sheng Y."/>
            <person name="Shibata Y."/>
            <person name="Shimada H."/>
            <person name="Shimada K."/>
            <person name="Silva D."/>
            <person name="Sinclair B."/>
            <person name="Sperling S."/>
            <person name="Stupka E."/>
            <person name="Sugiura K."/>
            <person name="Sultana R."/>
            <person name="Takenaka Y."/>
            <person name="Taki K."/>
            <person name="Tammoja K."/>
            <person name="Tan S.L."/>
            <person name="Tang S."/>
            <person name="Taylor M.S."/>
            <person name="Tegner J."/>
            <person name="Teichmann S.A."/>
            <person name="Ueda H.R."/>
            <person name="van Nimwegen E."/>
            <person name="Verardo R."/>
            <person name="Wei C.L."/>
            <person name="Yagi K."/>
            <person name="Yamanishi H."/>
            <person name="Zabarovsky E."/>
            <person name="Zhu S."/>
            <person name="Zimmer A."/>
            <person name="Hide W."/>
            <person name="Bult C."/>
            <person name="Grimmond S.M."/>
            <person name="Teasdale R.D."/>
            <person name="Liu E.T."/>
            <person name="Brusic V."/>
            <person name="Quackenbush J."/>
            <person name="Wahlestedt C."/>
            <person name="Mattick J.S."/>
            <person name="Hume D.A."/>
            <person name="Kai C."/>
            <person name="Sasaki D."/>
            <person name="Tomaru Y."/>
            <person name="Fukuda S."/>
            <person name="Kanamori-Katayama M."/>
            <person name="Suzuki M."/>
            <person name="Aoki J."/>
            <person name="Arakawa T."/>
            <person name="Iida J."/>
            <person name="Imamura K."/>
            <person name="Itoh M."/>
            <person name="Kato T."/>
            <person name="Kawaji H."/>
            <person name="Kawagashira N."/>
            <person name="Kawashima T."/>
            <person name="Kojima M."/>
            <person name="Kondo S."/>
            <person name="Konno H."/>
            <person name="Nakano K."/>
            <person name="Ninomiya N."/>
            <person name="Nishio T."/>
            <person name="Okada M."/>
            <person name="Plessy C."/>
            <person name="Shibata K."/>
            <person name="Shiraki T."/>
            <person name="Suzuki S."/>
            <person name="Tagami M."/>
            <person name="Waki K."/>
            <person name="Watahiki A."/>
            <person name="Okamura-Oho Y."/>
            <person name="Suzuki H."/>
            <person name="Kawai J."/>
            <person name="Hayashizaki Y."/>
        </authorList>
    </citation>
    <scope>NUCLEOTIDE SEQUENCE [LARGE SCALE MRNA] (ISOFORMS 1 AND 2)</scope>
    <source>
        <strain>C57BL/6J</strain>
        <strain>NOD</strain>
        <tissue>Spleen</tissue>
        <tissue>Thymus</tissue>
        <tissue>Tongue</tissue>
    </source>
</reference>
<reference key="2">
    <citation type="journal article" date="2009" name="PLoS Biol.">
        <title>Lineage-specific biology revealed by a finished genome assembly of the mouse.</title>
        <authorList>
            <person name="Church D.M."/>
            <person name="Goodstadt L."/>
            <person name="Hillier L.W."/>
            <person name="Zody M.C."/>
            <person name="Goldstein S."/>
            <person name="She X."/>
            <person name="Bult C.J."/>
            <person name="Agarwala R."/>
            <person name="Cherry J.L."/>
            <person name="DiCuccio M."/>
            <person name="Hlavina W."/>
            <person name="Kapustin Y."/>
            <person name="Meric P."/>
            <person name="Maglott D."/>
            <person name="Birtle Z."/>
            <person name="Marques A.C."/>
            <person name="Graves T."/>
            <person name="Zhou S."/>
            <person name="Teague B."/>
            <person name="Potamousis K."/>
            <person name="Churas C."/>
            <person name="Place M."/>
            <person name="Herschleb J."/>
            <person name="Runnheim R."/>
            <person name="Forrest D."/>
            <person name="Amos-Landgraf J."/>
            <person name="Schwartz D.C."/>
            <person name="Cheng Z."/>
            <person name="Lindblad-Toh K."/>
            <person name="Eichler E.E."/>
            <person name="Ponting C.P."/>
        </authorList>
    </citation>
    <scope>NUCLEOTIDE SEQUENCE [LARGE SCALE GENOMIC DNA]</scope>
    <source>
        <strain>C57BL/6J</strain>
    </source>
</reference>
<reference key="3">
    <citation type="journal article" date="2004" name="Genome Res.">
        <title>The status, quality, and expansion of the NIH full-length cDNA project: the Mammalian Gene Collection (MGC).</title>
        <authorList>
            <consortium name="The MGC Project Team"/>
        </authorList>
    </citation>
    <scope>NUCLEOTIDE SEQUENCE [LARGE SCALE MRNA] (ISOFORMS 1 AND 3)</scope>
    <source>
        <strain>C57BL/6J</strain>
        <tissue>Brain</tissue>
        <tissue>Thymus</tissue>
    </source>
</reference>
<reference key="4">
    <citation type="journal article" date="2019" name="EMBO Rep.">
        <title>FAM83D directs protein kinase CK1alpha to the mitotic spindle for proper spindle positioning.</title>
        <authorList>
            <person name="Fulcher L.J."/>
            <person name="He Z."/>
            <person name="Mei L."/>
            <person name="Macartney T.J."/>
            <person name="Wood N.T."/>
            <person name="Prescott A.R."/>
            <person name="Whigham A.J."/>
            <person name="Varghese J."/>
            <person name="Gourlay R."/>
            <person name="Ball G."/>
            <person name="Clarke R."/>
            <person name="Campbell D.G."/>
            <person name="Maxwell C.A."/>
            <person name="Sapkota G.P."/>
        </authorList>
    </citation>
    <scope>PHOSPHORYLATION</scope>
</reference>